<keyword id="KW-0687">Ribonucleoprotein</keyword>
<keyword id="KW-0689">Ribosomal protein</keyword>
<keyword id="KW-0694">RNA-binding</keyword>
<keyword id="KW-0699">rRNA-binding</keyword>
<accession>Q8FYL7</accession>
<accession>G0K7R6</accession>
<reference key="1">
    <citation type="journal article" date="2002" name="Proc. Natl. Acad. Sci. U.S.A.">
        <title>The Brucella suis genome reveals fundamental similarities between animal and plant pathogens and symbionts.</title>
        <authorList>
            <person name="Paulsen I.T."/>
            <person name="Seshadri R."/>
            <person name="Nelson K.E."/>
            <person name="Eisen J.A."/>
            <person name="Heidelberg J.F."/>
            <person name="Read T.D."/>
            <person name="Dodson R.J."/>
            <person name="Umayam L.A."/>
            <person name="Brinkac L.M."/>
            <person name="Beanan M.J."/>
            <person name="Daugherty S.C."/>
            <person name="DeBoy R.T."/>
            <person name="Durkin A.S."/>
            <person name="Kolonay J.F."/>
            <person name="Madupu R."/>
            <person name="Nelson W.C."/>
            <person name="Ayodeji B."/>
            <person name="Kraul M."/>
            <person name="Shetty J."/>
            <person name="Malek J.A."/>
            <person name="Van Aken S.E."/>
            <person name="Riedmuller S."/>
            <person name="Tettelin H."/>
            <person name="Gill S.R."/>
            <person name="White O."/>
            <person name="Salzberg S.L."/>
            <person name="Hoover D.L."/>
            <person name="Lindler L.E."/>
            <person name="Halling S.M."/>
            <person name="Boyle S.M."/>
            <person name="Fraser C.M."/>
        </authorList>
    </citation>
    <scope>NUCLEOTIDE SEQUENCE [LARGE SCALE GENOMIC DNA]</scope>
    <source>
        <strain>1330</strain>
    </source>
</reference>
<reference key="2">
    <citation type="journal article" date="2011" name="J. Bacteriol.">
        <title>Revised genome sequence of Brucella suis 1330.</title>
        <authorList>
            <person name="Tae H."/>
            <person name="Shallom S."/>
            <person name="Settlage R."/>
            <person name="Preston D."/>
            <person name="Adams L.G."/>
            <person name="Garner H.R."/>
        </authorList>
    </citation>
    <scope>NUCLEOTIDE SEQUENCE [LARGE SCALE GENOMIC DNA]</scope>
    <source>
        <strain>1330</strain>
    </source>
</reference>
<evidence type="ECO:0000255" key="1">
    <source>
        <dbReference type="HAMAP-Rule" id="MF_01363"/>
    </source>
</evidence>
<evidence type="ECO:0000256" key="2">
    <source>
        <dbReference type="SAM" id="MobiDB-lite"/>
    </source>
</evidence>
<evidence type="ECO:0000305" key="3"/>
<organism>
    <name type="scientific">Brucella suis biovar 1 (strain 1330)</name>
    <dbReference type="NCBI Taxonomy" id="204722"/>
    <lineage>
        <taxon>Bacteria</taxon>
        <taxon>Pseudomonadati</taxon>
        <taxon>Pseudomonadota</taxon>
        <taxon>Alphaproteobacteria</taxon>
        <taxon>Hyphomicrobiales</taxon>
        <taxon>Brucellaceae</taxon>
        <taxon>Brucella/Ochrobactrum group</taxon>
        <taxon>Brucella</taxon>
    </lineage>
</organism>
<feature type="chain" id="PRO_0000269292" description="Large ribosomal subunit protein bL21">
    <location>
        <begin position="1"/>
        <end position="142"/>
    </location>
</feature>
<feature type="region of interest" description="Disordered" evidence="2">
    <location>
        <begin position="74"/>
        <end position="142"/>
    </location>
</feature>
<feature type="compositionally biased region" description="Basic residues" evidence="2">
    <location>
        <begin position="74"/>
        <end position="84"/>
    </location>
</feature>
<feature type="compositionally biased region" description="Basic and acidic residues" evidence="2">
    <location>
        <begin position="107"/>
        <end position="125"/>
    </location>
</feature>
<feature type="compositionally biased region" description="Basic residues" evidence="2">
    <location>
        <begin position="126"/>
        <end position="135"/>
    </location>
</feature>
<proteinExistence type="inferred from homology"/>
<name>RL21_BRUSU</name>
<sequence length="142" mass="15021">MFAVIKTGGKQYRVAANDLIKVEKVAGEAGDIVEFAEVLMVGSTIGAPTVAGALVTAEVVEQGRGRKVIAFKKRRRQNSKRTRGHRQELTTIRISEILTDGAKPSKKAAEKKAPKADAAEGEAAKPKKAAPKKAAAKAESAE</sequence>
<protein>
    <recommendedName>
        <fullName evidence="1">Large ribosomal subunit protein bL21</fullName>
    </recommendedName>
    <alternativeName>
        <fullName evidence="3">50S ribosomal protein L21</fullName>
    </alternativeName>
</protein>
<comment type="function">
    <text evidence="1">This protein binds to 23S rRNA in the presence of protein L20.</text>
</comment>
<comment type="subunit">
    <text evidence="1">Part of the 50S ribosomal subunit. Contacts protein L20.</text>
</comment>
<comment type="similarity">
    <text evidence="1">Belongs to the bacterial ribosomal protein bL21 family.</text>
</comment>
<dbReference type="EMBL" id="AE014291">
    <property type="protein sequence ID" value="AAN30745.1"/>
    <property type="molecule type" value="Genomic_DNA"/>
</dbReference>
<dbReference type="EMBL" id="CP002997">
    <property type="protein sequence ID" value="AEM19162.1"/>
    <property type="molecule type" value="Genomic_DNA"/>
</dbReference>
<dbReference type="RefSeq" id="WP_002967949.1">
    <property type="nucleotide sequence ID" value="NZ_KN046804.1"/>
</dbReference>
<dbReference type="SMR" id="Q8FYL7"/>
<dbReference type="GeneID" id="97533030"/>
<dbReference type="KEGG" id="bms:BR1850"/>
<dbReference type="KEGG" id="bsi:BS1330_I1844"/>
<dbReference type="PATRIC" id="fig|204722.21.peg.3446"/>
<dbReference type="HOGENOM" id="CLU_061463_1_1_5"/>
<dbReference type="PhylomeDB" id="Q8FYL7"/>
<dbReference type="Proteomes" id="UP000007104">
    <property type="component" value="Chromosome I"/>
</dbReference>
<dbReference type="GO" id="GO:0005737">
    <property type="term" value="C:cytoplasm"/>
    <property type="evidence" value="ECO:0007669"/>
    <property type="project" value="UniProtKB-ARBA"/>
</dbReference>
<dbReference type="GO" id="GO:1990904">
    <property type="term" value="C:ribonucleoprotein complex"/>
    <property type="evidence" value="ECO:0007669"/>
    <property type="project" value="UniProtKB-KW"/>
</dbReference>
<dbReference type="GO" id="GO:0005840">
    <property type="term" value="C:ribosome"/>
    <property type="evidence" value="ECO:0007669"/>
    <property type="project" value="UniProtKB-KW"/>
</dbReference>
<dbReference type="GO" id="GO:0019843">
    <property type="term" value="F:rRNA binding"/>
    <property type="evidence" value="ECO:0007669"/>
    <property type="project" value="UniProtKB-UniRule"/>
</dbReference>
<dbReference type="GO" id="GO:0003735">
    <property type="term" value="F:structural constituent of ribosome"/>
    <property type="evidence" value="ECO:0007669"/>
    <property type="project" value="InterPro"/>
</dbReference>
<dbReference type="GO" id="GO:0006412">
    <property type="term" value="P:translation"/>
    <property type="evidence" value="ECO:0007669"/>
    <property type="project" value="UniProtKB-UniRule"/>
</dbReference>
<dbReference type="HAMAP" id="MF_01363">
    <property type="entry name" value="Ribosomal_bL21"/>
    <property type="match status" value="1"/>
</dbReference>
<dbReference type="InterPro" id="IPR028909">
    <property type="entry name" value="bL21-like"/>
</dbReference>
<dbReference type="InterPro" id="IPR036164">
    <property type="entry name" value="bL21-like_sf"/>
</dbReference>
<dbReference type="InterPro" id="IPR001787">
    <property type="entry name" value="Ribosomal_bL21"/>
</dbReference>
<dbReference type="NCBIfam" id="TIGR00061">
    <property type="entry name" value="L21"/>
    <property type="match status" value="1"/>
</dbReference>
<dbReference type="PANTHER" id="PTHR21349">
    <property type="entry name" value="50S RIBOSOMAL PROTEIN L21"/>
    <property type="match status" value="1"/>
</dbReference>
<dbReference type="PANTHER" id="PTHR21349:SF0">
    <property type="entry name" value="LARGE RIBOSOMAL SUBUNIT PROTEIN BL21M"/>
    <property type="match status" value="1"/>
</dbReference>
<dbReference type="Pfam" id="PF00829">
    <property type="entry name" value="Ribosomal_L21p"/>
    <property type="match status" value="1"/>
</dbReference>
<dbReference type="SUPFAM" id="SSF141091">
    <property type="entry name" value="L21p-like"/>
    <property type="match status" value="1"/>
</dbReference>
<gene>
    <name evidence="1" type="primary">rplU</name>
    <name type="ordered locus">BR1850</name>
    <name type="ordered locus">BS1330_I1844</name>
</gene>